<dbReference type="EC" id="2.7.7.7"/>
<dbReference type="EMBL" id="AE006914">
    <property type="protein sequence ID" value="AAL03650.1"/>
    <property type="molecule type" value="Genomic_DNA"/>
</dbReference>
<dbReference type="PIR" id="H97838">
    <property type="entry name" value="H97838"/>
</dbReference>
<dbReference type="RefSeq" id="WP_010977685.1">
    <property type="nucleotide sequence ID" value="NC_003103.1"/>
</dbReference>
<dbReference type="SMR" id="Q92GL1"/>
<dbReference type="GeneID" id="928107"/>
<dbReference type="KEGG" id="rco:RC1112"/>
<dbReference type="PATRIC" id="fig|272944.4.peg.1281"/>
<dbReference type="HOGENOM" id="CLU_047806_2_1_5"/>
<dbReference type="Proteomes" id="UP000000816">
    <property type="component" value="Chromosome"/>
</dbReference>
<dbReference type="GO" id="GO:0005829">
    <property type="term" value="C:cytosol"/>
    <property type="evidence" value="ECO:0007669"/>
    <property type="project" value="TreeGrafter"/>
</dbReference>
<dbReference type="GO" id="GO:0008408">
    <property type="term" value="F:3'-5' exonuclease activity"/>
    <property type="evidence" value="ECO:0007669"/>
    <property type="project" value="TreeGrafter"/>
</dbReference>
<dbReference type="GO" id="GO:0003677">
    <property type="term" value="F:DNA binding"/>
    <property type="evidence" value="ECO:0007669"/>
    <property type="project" value="InterPro"/>
</dbReference>
<dbReference type="GO" id="GO:0003887">
    <property type="term" value="F:DNA-directed DNA polymerase activity"/>
    <property type="evidence" value="ECO:0007669"/>
    <property type="project" value="UniProtKB-KW"/>
</dbReference>
<dbReference type="GO" id="GO:0046872">
    <property type="term" value="F:metal ion binding"/>
    <property type="evidence" value="ECO:0007669"/>
    <property type="project" value="UniProtKB-KW"/>
</dbReference>
<dbReference type="GO" id="GO:0045004">
    <property type="term" value="P:DNA replication proofreading"/>
    <property type="evidence" value="ECO:0007669"/>
    <property type="project" value="TreeGrafter"/>
</dbReference>
<dbReference type="CDD" id="cd06131">
    <property type="entry name" value="DNA_pol_III_epsilon_Ecoli_like"/>
    <property type="match status" value="1"/>
</dbReference>
<dbReference type="FunFam" id="3.30.420.10:FF:000012">
    <property type="entry name" value="DNA polymerase III subunit epsilon"/>
    <property type="match status" value="1"/>
</dbReference>
<dbReference type="Gene3D" id="3.30.420.10">
    <property type="entry name" value="Ribonuclease H-like superfamily/Ribonuclease H"/>
    <property type="match status" value="1"/>
</dbReference>
<dbReference type="InterPro" id="IPR006054">
    <property type="entry name" value="DnaQ"/>
</dbReference>
<dbReference type="InterPro" id="IPR006309">
    <property type="entry name" value="DnaQ_proteo"/>
</dbReference>
<dbReference type="InterPro" id="IPR013520">
    <property type="entry name" value="Exonuclease_RNaseT/DNA_pol3"/>
</dbReference>
<dbReference type="InterPro" id="IPR012337">
    <property type="entry name" value="RNaseH-like_sf"/>
</dbReference>
<dbReference type="InterPro" id="IPR036397">
    <property type="entry name" value="RNaseH_sf"/>
</dbReference>
<dbReference type="NCBIfam" id="TIGR00573">
    <property type="entry name" value="dnaq"/>
    <property type="match status" value="1"/>
</dbReference>
<dbReference type="NCBIfam" id="TIGR01406">
    <property type="entry name" value="dnaQ_proteo"/>
    <property type="match status" value="1"/>
</dbReference>
<dbReference type="NCBIfam" id="NF004316">
    <property type="entry name" value="PRK05711.1"/>
    <property type="match status" value="1"/>
</dbReference>
<dbReference type="PANTHER" id="PTHR30231">
    <property type="entry name" value="DNA POLYMERASE III SUBUNIT EPSILON"/>
    <property type="match status" value="1"/>
</dbReference>
<dbReference type="PANTHER" id="PTHR30231:SF41">
    <property type="entry name" value="DNA POLYMERASE III SUBUNIT EPSILON"/>
    <property type="match status" value="1"/>
</dbReference>
<dbReference type="Pfam" id="PF00929">
    <property type="entry name" value="RNase_T"/>
    <property type="match status" value="1"/>
</dbReference>
<dbReference type="SMART" id="SM00479">
    <property type="entry name" value="EXOIII"/>
    <property type="match status" value="1"/>
</dbReference>
<dbReference type="SUPFAM" id="SSF53098">
    <property type="entry name" value="Ribonuclease H-like"/>
    <property type="match status" value="1"/>
</dbReference>
<evidence type="ECO:0000250" key="1"/>
<protein>
    <recommendedName>
        <fullName>DNA polymerase III subunit epsilon</fullName>
        <ecNumber>2.7.7.7</ecNumber>
    </recommendedName>
</protein>
<accession>Q92GL1</accession>
<proteinExistence type="inferred from homology"/>
<gene>
    <name type="primary">dnaQ</name>
    <name type="ordered locus">RC1112</name>
</gene>
<organism>
    <name type="scientific">Rickettsia conorii (strain ATCC VR-613 / Malish 7)</name>
    <dbReference type="NCBI Taxonomy" id="272944"/>
    <lineage>
        <taxon>Bacteria</taxon>
        <taxon>Pseudomonadati</taxon>
        <taxon>Pseudomonadota</taxon>
        <taxon>Alphaproteobacteria</taxon>
        <taxon>Rickettsiales</taxon>
        <taxon>Rickettsiaceae</taxon>
        <taxon>Rickettsieae</taxon>
        <taxon>Rickettsia</taxon>
        <taxon>spotted fever group</taxon>
    </lineage>
</organism>
<sequence length="230" mass="26216">MSSLREIILDTETTGLDPRQGHRIVEIGAIEMVNKVLTGRNFHFYINPERDMPFEAYRIHGISGEFLKDKPLFHTIADDFLEFISDSKLIIHNAPFDIKFLNHELSLLKRTDIKLLELANTIDTLVMARSIFPGSKYNLDALCKRFKVDNSGRQLHGALKDAALLAEVYVELMGGRQSAFKMVDKSAVINNLATNQVNNKTEQTTIVIKPTKEELQKHKEFLSRILKTAY</sequence>
<reference key="1">
    <citation type="journal article" date="2001" name="Science">
        <title>Mechanisms of evolution in Rickettsia conorii and R. prowazekii.</title>
        <authorList>
            <person name="Ogata H."/>
            <person name="Audic S."/>
            <person name="Renesto-Audiffren P."/>
            <person name="Fournier P.-E."/>
            <person name="Barbe V."/>
            <person name="Samson D."/>
            <person name="Roux V."/>
            <person name="Cossart P."/>
            <person name="Weissenbach J."/>
            <person name="Claverie J.-M."/>
            <person name="Raoult D."/>
        </authorList>
    </citation>
    <scope>NUCLEOTIDE SEQUENCE [LARGE SCALE GENOMIC DNA]</scope>
    <source>
        <strain>ATCC VR-613 / Malish 7</strain>
    </source>
</reference>
<keyword id="KW-0235">DNA replication</keyword>
<keyword id="KW-0239">DNA-directed DNA polymerase</keyword>
<keyword id="KW-0269">Exonuclease</keyword>
<keyword id="KW-0378">Hydrolase</keyword>
<keyword id="KW-0460">Magnesium</keyword>
<keyword id="KW-0464">Manganese</keyword>
<keyword id="KW-0479">Metal-binding</keyword>
<keyword id="KW-0540">Nuclease</keyword>
<keyword id="KW-0548">Nucleotidyltransferase</keyword>
<keyword id="KW-0808">Transferase</keyword>
<feature type="chain" id="PRO_0000105488" description="DNA polymerase III subunit epsilon">
    <location>
        <begin position="1"/>
        <end position="230"/>
    </location>
</feature>
<feature type="active site" description="Proton acceptor" evidence="1">
    <location>
        <position position="156"/>
    </location>
</feature>
<feature type="binding site" evidence="1">
    <location>
        <position position="10"/>
    </location>
    <ligand>
        <name>a divalent metal cation</name>
        <dbReference type="ChEBI" id="CHEBI:60240"/>
        <label>1</label>
        <note>catalytic</note>
    </ligand>
</feature>
<feature type="binding site" evidence="1">
    <location>
        <position position="10"/>
    </location>
    <ligand>
        <name>a divalent metal cation</name>
        <dbReference type="ChEBI" id="CHEBI:60240"/>
        <label>2</label>
        <note>catalytic</note>
    </ligand>
</feature>
<feature type="binding site" evidence="1">
    <location>
        <position position="10"/>
    </location>
    <ligand>
        <name>substrate</name>
    </ligand>
</feature>
<feature type="binding site" evidence="1">
    <location>
        <position position="12"/>
    </location>
    <ligand>
        <name>a divalent metal cation</name>
        <dbReference type="ChEBI" id="CHEBI:60240"/>
        <label>1</label>
        <note>catalytic</note>
    </ligand>
</feature>
<feature type="binding site" evidence="1">
    <location>
        <position position="12"/>
    </location>
    <ligand>
        <name>substrate</name>
    </ligand>
</feature>
<feature type="binding site" evidence="1">
    <location>
        <position position="55"/>
    </location>
    <ligand>
        <name>substrate</name>
    </ligand>
</feature>
<feature type="binding site" evidence="1">
    <location>
        <position position="60"/>
    </location>
    <ligand>
        <name>substrate</name>
    </ligand>
</feature>
<feature type="binding site" evidence="1">
    <location>
        <position position="161"/>
    </location>
    <ligand>
        <name>a divalent metal cation</name>
        <dbReference type="ChEBI" id="CHEBI:60240"/>
        <label>1</label>
        <note>catalytic</note>
    </ligand>
</feature>
<feature type="binding site" evidence="1">
    <location>
        <position position="161"/>
    </location>
    <ligand>
        <name>substrate</name>
    </ligand>
</feature>
<comment type="function">
    <text evidence="1">DNA polymerase III is a complex, multichain enzyme responsible for most of the replicative synthesis in bacteria. The epsilon subunit contain the editing function and is a proofreading 3'-5' exonuclease (By similarity).</text>
</comment>
<comment type="catalytic activity">
    <reaction>
        <text>DNA(n) + a 2'-deoxyribonucleoside 5'-triphosphate = DNA(n+1) + diphosphate</text>
        <dbReference type="Rhea" id="RHEA:22508"/>
        <dbReference type="Rhea" id="RHEA-COMP:17339"/>
        <dbReference type="Rhea" id="RHEA-COMP:17340"/>
        <dbReference type="ChEBI" id="CHEBI:33019"/>
        <dbReference type="ChEBI" id="CHEBI:61560"/>
        <dbReference type="ChEBI" id="CHEBI:173112"/>
        <dbReference type="EC" id="2.7.7.7"/>
    </reaction>
</comment>
<comment type="cofactor">
    <cofactor evidence="1">
        <name>Mg(2+)</name>
        <dbReference type="ChEBI" id="CHEBI:18420"/>
    </cofactor>
    <cofactor evidence="1">
        <name>Mn(2+)</name>
        <dbReference type="ChEBI" id="CHEBI:29035"/>
    </cofactor>
    <text evidence="1">Binds 2 divalent metal cations. Magnesium or manganese.</text>
</comment>
<comment type="subunit">
    <text evidence="1">DNA polymerase III contains a core (composed of alpha, epsilon and theta chains) that associates with a tau subunit. This core dimerizes to form the POLIII' complex. PolIII' associates with the gamma complex (composed of gamma, delta, delta', psi and chi chains) and with the beta chain to form the complete DNA polymerase III complex (By similarity).</text>
</comment>
<name>DPO3E_RICCN</name>